<organism>
    <name type="scientific">Metapenaeus ensis</name>
    <name type="common">Greasyback shrimp</name>
    <name type="synonym">Penaeus ensis</name>
    <dbReference type="NCBI Taxonomy" id="32278"/>
    <lineage>
        <taxon>Eukaryota</taxon>
        <taxon>Metazoa</taxon>
        <taxon>Ecdysozoa</taxon>
        <taxon>Arthropoda</taxon>
        <taxon>Crustacea</taxon>
        <taxon>Multicrustacea</taxon>
        <taxon>Malacostraca</taxon>
        <taxon>Eumalacostraca</taxon>
        <taxon>Eucarida</taxon>
        <taxon>Decapoda</taxon>
        <taxon>Dendrobranchiata</taxon>
        <taxon>Penaeoidea</taxon>
        <taxon>Penaeidae</taxon>
        <taxon>Metapenaeus</taxon>
    </lineage>
</organism>
<name>KARG_METEN</name>
<accession>B1PVZ9</accession>
<evidence type="ECO:0000250" key="1">
    <source>
        <dbReference type="UniProtKB" id="Q004B5"/>
    </source>
</evidence>
<evidence type="ECO:0000255" key="2">
    <source>
        <dbReference type="PROSITE-ProRule" id="PRU00842"/>
    </source>
</evidence>
<evidence type="ECO:0000255" key="3">
    <source>
        <dbReference type="PROSITE-ProRule" id="PRU00843"/>
    </source>
</evidence>
<evidence type="ECO:0000255" key="4">
    <source>
        <dbReference type="RuleBase" id="RU000505"/>
    </source>
</evidence>
<evidence type="ECO:0000269" key="5">
    <source>
    </source>
</evidence>
<evidence type="ECO:0000269" key="6">
    <source>
    </source>
</evidence>
<evidence type="ECO:0000269" key="7">
    <source>
    </source>
</evidence>
<evidence type="ECO:0000269" key="8">
    <source>
    </source>
</evidence>
<evidence type="ECO:0000269" key="9">
    <source>
    </source>
</evidence>
<evidence type="ECO:0000303" key="10">
    <source>
    </source>
</evidence>
<evidence type="ECO:0000303" key="11">
    <source>
    </source>
</evidence>
<evidence type="ECO:0000303" key="12">
    <source>
    </source>
</evidence>
<evidence type="ECO:0000303" key="13">
    <source>
    </source>
</evidence>
<evidence type="ECO:0000305" key="14"/>
<evidence type="ECO:0000305" key="15">
    <source>
    </source>
</evidence>
<evidence type="ECO:0000305" key="16">
    <source>
    </source>
</evidence>
<evidence type="ECO:0000305" key="17">
    <source>
    </source>
</evidence>
<evidence type="ECO:0000305" key="18">
    <source>
    </source>
</evidence>
<evidence type="ECO:0000312" key="19">
    <source>
        <dbReference type="EMBL" id="ACA51932.1"/>
    </source>
</evidence>
<dbReference type="EC" id="2.7.3.3" evidence="5 7 8 9"/>
<dbReference type="EMBL" id="EU497674">
    <property type="protein sequence ID" value="ACA51932.1"/>
    <property type="molecule type" value="mRNA"/>
</dbReference>
<dbReference type="SMR" id="B1PVZ9"/>
<dbReference type="Allergome" id="793">
    <property type="allergen name" value="Met e 2"/>
</dbReference>
<dbReference type="BRENDA" id="2.7.3.3">
    <property type="organism ID" value="9650"/>
</dbReference>
<dbReference type="SABIO-RK" id="B1PVZ9"/>
<dbReference type="GO" id="GO:0005615">
    <property type="term" value="C:extracellular space"/>
    <property type="evidence" value="ECO:0007669"/>
    <property type="project" value="TreeGrafter"/>
</dbReference>
<dbReference type="GO" id="GO:0004054">
    <property type="term" value="F:arginine kinase activity"/>
    <property type="evidence" value="ECO:0000314"/>
    <property type="project" value="UniProtKB"/>
</dbReference>
<dbReference type="GO" id="GO:0005524">
    <property type="term" value="F:ATP binding"/>
    <property type="evidence" value="ECO:0000250"/>
    <property type="project" value="UniProtKB"/>
</dbReference>
<dbReference type="GO" id="GO:0004111">
    <property type="term" value="F:creatine kinase activity"/>
    <property type="evidence" value="ECO:0007669"/>
    <property type="project" value="InterPro"/>
</dbReference>
<dbReference type="GO" id="GO:0008585">
    <property type="term" value="P:female gonad development"/>
    <property type="evidence" value="ECO:0000270"/>
    <property type="project" value="UniProtKB"/>
</dbReference>
<dbReference type="GO" id="GO:0046314">
    <property type="term" value="P:phosphocreatine biosynthetic process"/>
    <property type="evidence" value="ECO:0007669"/>
    <property type="project" value="InterPro"/>
</dbReference>
<dbReference type="CDD" id="cd07932">
    <property type="entry name" value="arginine_kinase_like"/>
    <property type="match status" value="1"/>
</dbReference>
<dbReference type="FunFam" id="3.30.590.10:FF:000006">
    <property type="entry name" value="Arginine kinase 1"/>
    <property type="match status" value="1"/>
</dbReference>
<dbReference type="FunFam" id="1.10.135.10:FF:000003">
    <property type="entry name" value="Three-domain arginine kinase"/>
    <property type="match status" value="1"/>
</dbReference>
<dbReference type="Gene3D" id="1.10.135.10">
    <property type="entry name" value="ATP:guanido phosphotransferase, N-terminal domain"/>
    <property type="match status" value="1"/>
</dbReference>
<dbReference type="Gene3D" id="3.30.590.10">
    <property type="entry name" value="Glutamine synthetase/guanido kinase, catalytic domain"/>
    <property type="match status" value="1"/>
</dbReference>
<dbReference type="InterPro" id="IPR000749">
    <property type="entry name" value="ATP-guanido_PTrfase"/>
</dbReference>
<dbReference type="InterPro" id="IPR022415">
    <property type="entry name" value="ATP-guanido_PTrfase_AS"/>
</dbReference>
<dbReference type="InterPro" id="IPR022414">
    <property type="entry name" value="ATP-guanido_PTrfase_cat"/>
</dbReference>
<dbReference type="InterPro" id="IPR022413">
    <property type="entry name" value="ATP-guanido_PTrfase_N"/>
</dbReference>
<dbReference type="InterPro" id="IPR036802">
    <property type="entry name" value="ATP-guanido_PTrfase_N_sf"/>
</dbReference>
<dbReference type="InterPro" id="IPR014746">
    <property type="entry name" value="Gln_synth/guanido_kin_cat_dom"/>
</dbReference>
<dbReference type="PANTHER" id="PTHR11547:SF38">
    <property type="entry name" value="ARGININE KINASE 1-RELATED"/>
    <property type="match status" value="1"/>
</dbReference>
<dbReference type="PANTHER" id="PTHR11547">
    <property type="entry name" value="ARGININE OR CREATINE KINASE"/>
    <property type="match status" value="1"/>
</dbReference>
<dbReference type="Pfam" id="PF00217">
    <property type="entry name" value="ATP-gua_Ptrans"/>
    <property type="match status" value="1"/>
</dbReference>
<dbReference type="Pfam" id="PF02807">
    <property type="entry name" value="ATP-gua_PtransN"/>
    <property type="match status" value="1"/>
</dbReference>
<dbReference type="SUPFAM" id="SSF55931">
    <property type="entry name" value="Glutamine synthetase/guanido kinase"/>
    <property type="match status" value="1"/>
</dbReference>
<dbReference type="SUPFAM" id="SSF48034">
    <property type="entry name" value="Guanido kinase N-terminal domain"/>
    <property type="match status" value="1"/>
</dbReference>
<dbReference type="PROSITE" id="PS00112">
    <property type="entry name" value="PHOSPHAGEN_KINASE"/>
    <property type="match status" value="1"/>
</dbReference>
<dbReference type="PROSITE" id="PS51510">
    <property type="entry name" value="PHOSPHAGEN_KINASE_C"/>
    <property type="match status" value="1"/>
</dbReference>
<dbReference type="PROSITE" id="PS51509">
    <property type="entry name" value="PHOSPHAGEN_KINASE_N"/>
    <property type="match status" value="1"/>
</dbReference>
<comment type="function">
    <text evidence="5 7 8 9">Catalyzes the reversible transfer of high energy ATP gamma-phosphate group to L-arginine.</text>
</comment>
<comment type="catalytic activity">
    <reaction evidence="5 7 8 9">
        <text>L-arginine + ATP = N(omega)-phospho-L-arginine + ADP + H(+)</text>
        <dbReference type="Rhea" id="RHEA:22940"/>
        <dbReference type="ChEBI" id="CHEBI:15378"/>
        <dbReference type="ChEBI" id="CHEBI:30616"/>
        <dbReference type="ChEBI" id="CHEBI:32682"/>
        <dbReference type="ChEBI" id="CHEBI:58477"/>
        <dbReference type="ChEBI" id="CHEBI:456216"/>
        <dbReference type="EC" id="2.7.3.3"/>
    </reaction>
    <physiologicalReaction direction="left-to-right" evidence="15 16 17 18">
        <dbReference type="Rhea" id="RHEA:22941"/>
    </physiologicalReaction>
    <physiologicalReaction direction="right-to-left" evidence="15 16 17 18">
        <dbReference type="Rhea" id="RHEA:22942"/>
    </physiologicalReaction>
</comment>
<comment type="biophysicochemical properties">
    <kinetics>
        <KM evidence="7">2.33 mM for ATP (at pH 8.5 and 30 degrees Celsius)</KM>
        <KM evidence="7">1.59 mM for L-arginine (at pH 8.5 and 30 degrees Celsius)</KM>
    </kinetics>
    <phDependence>
        <text evidence="7">Optimum pH is 8.5.</text>
    </phDependence>
    <temperatureDependence>
        <text evidence="7">Optimum temperature is 30 degrees Celsius.</text>
    </temperatureDependence>
</comment>
<comment type="developmental stage">
    <text evidence="6">Expressed during ovarian development. The highest expression level is detected at stages I (immature with gonado-somatic index (GSI) &lt;2%) and II (late immature with GSI 2% to 3%) of ovarian maturation. Expression decreases from stage III (early mature with GSI 3% to 6%) to V (ripe with GSI &gt;9%), but increases in between at stage IV (late mature with GSI 6% to 9%) of ovarian maturation.</text>
</comment>
<comment type="allergen">
    <text evidence="5">Causes an allergic reaction in human. Binds to IgE in 100% of the 13 shrimp-allergic patients tested.</text>
</comment>
<comment type="similarity">
    <text evidence="3 4 14">Belongs to the ATP:guanido phosphotransferase family.</text>
</comment>
<keyword id="KW-0020">Allergen</keyword>
<keyword id="KW-0067">ATP-binding</keyword>
<keyword id="KW-0418">Kinase</keyword>
<keyword id="KW-0547">Nucleotide-binding</keyword>
<keyword id="KW-0808">Transferase</keyword>
<feature type="initiator methionine" description="Removed" evidence="1">
    <location>
        <position position="1"/>
    </location>
</feature>
<feature type="chain" id="PRO_0000447430" description="Arginine kinase Met e 2">
    <location>
        <begin position="2"/>
        <end position="357"/>
    </location>
</feature>
<feature type="domain" description="Phosphagen kinase N-terminal" evidence="2">
    <location>
        <begin position="9"/>
        <end position="91"/>
    </location>
</feature>
<feature type="domain" description="Phosphagen kinase C-terminal" evidence="3">
    <location>
        <begin position="119"/>
        <end position="356"/>
    </location>
</feature>
<feature type="binding site" evidence="1">
    <location>
        <begin position="64"/>
        <end position="68"/>
    </location>
    <ligand>
        <name>L-arginine</name>
        <dbReference type="ChEBI" id="CHEBI:32682"/>
    </ligand>
</feature>
<feature type="binding site" evidence="3">
    <location>
        <begin position="122"/>
        <end position="126"/>
    </location>
    <ligand>
        <name>ATP</name>
        <dbReference type="ChEBI" id="CHEBI:30616"/>
    </ligand>
</feature>
<feature type="binding site" evidence="3">
    <location>
        <position position="185"/>
    </location>
    <ligand>
        <name>ATP</name>
        <dbReference type="ChEBI" id="CHEBI:30616"/>
    </ligand>
</feature>
<feature type="binding site" evidence="1">
    <location>
        <position position="225"/>
    </location>
    <ligand>
        <name>L-arginine</name>
        <dbReference type="ChEBI" id="CHEBI:32682"/>
    </ligand>
</feature>
<feature type="binding site" evidence="3">
    <location>
        <position position="229"/>
    </location>
    <ligand>
        <name>ATP</name>
        <dbReference type="ChEBI" id="CHEBI:30616"/>
    </ligand>
</feature>
<feature type="binding site" evidence="1">
    <location>
        <position position="271"/>
    </location>
    <ligand>
        <name>L-arginine</name>
        <dbReference type="ChEBI" id="CHEBI:32682"/>
    </ligand>
</feature>
<feature type="binding site" evidence="3">
    <location>
        <begin position="280"/>
        <end position="284"/>
    </location>
    <ligand>
        <name>ATP</name>
        <dbReference type="ChEBI" id="CHEBI:30616"/>
    </ligand>
</feature>
<feature type="binding site" evidence="3">
    <location>
        <begin position="309"/>
        <end position="314"/>
    </location>
    <ligand>
        <name>ATP</name>
        <dbReference type="ChEBI" id="CHEBI:30616"/>
    </ligand>
</feature>
<feature type="binding site" evidence="1">
    <location>
        <position position="314"/>
    </location>
    <ligand>
        <name>L-arginine</name>
        <dbReference type="ChEBI" id="CHEBI:32682"/>
    </ligand>
</feature>
<feature type="mutagenesis site" description="Retains almost 90% of the catalytic activity of the wild-type in the forward reaction. Altered three-dimensional conformation and impaired structural stability of the protein." evidence="9">
    <original>D</original>
    <variation>E</variation>
    <location>
        <position position="62"/>
    </location>
</feature>
<feature type="mutagenesis site" description="Significantly reduced catalytic activity in the forward reaction. Altered three-dimensional conformation and impaired structural stability of the protein." evidence="9">
    <original>D</original>
    <variation>G</variation>
    <location>
        <position position="62"/>
    </location>
</feature>
<feature type="mutagenesis site" description="Significantly reduced catalytic activity in the forward reaction. Altered three-dimensional conformation and impaired structural stability of the protein." evidence="9">
    <original>R</original>
    <variation>G</variation>
    <location>
        <position position="193"/>
    </location>
</feature>
<feature type="mutagenesis site" description="Retains almost 90% of the catalytic activity of the wild-type in the forward reaction. Altered three-dimensional conformation and impaired structural stability of the protein." evidence="9">
    <original>R</original>
    <variation>K</variation>
    <location>
        <position position="193"/>
    </location>
</feature>
<feature type="mutagenesis site" description="Loss of catalytic activity in the forward reaction, but has ability to bind the substrate." evidence="8">
    <original>C</original>
    <variation>S</variation>
    <variation>A</variation>
    <location>
        <position position="271"/>
    </location>
</feature>
<sequence length="357" mass="40263">MADAAVIEKLEAGFKKLEAATDCKSLLKKYLTKEVFDKLKDKKTSLGATLLDVIQSGVENLDSGVGIYAPDAEAYTLFAPLFDPIIEDYHVGFKQTDKHPNKDFGDVNSFVNVDPEGKFVISTRVRCGRSMQGYPFNPCLTESQYKEMEAKVSSTLSSLEGELKGTYYPLTGMSKEVQQKLIDDHFLFKEGDRFLQAANACRYWPAGRGIYHNDNKTFLVWVNEEDHLRIISMQMGGDLGQVFRRLTSAVNEIEKRIPFSHHDRLGFLTFCPTNLGTTVRASVHIKLPKLAANREKLEEVAGKYNLQVRGTRGEHTEAEGGIYDISNKRRMGLTEFQAVKEMQDGILELIKIEKEMI</sequence>
<protein>
    <recommendedName>
        <fullName evidence="10 11 12 13">Arginine kinase Met e 2</fullName>
        <shortName evidence="11 12 13">AK</shortName>
        <ecNumber evidence="5 7 8 9">2.7.3.3</ecNumber>
    </recommendedName>
    <allergenName evidence="14">Met e 2</allergenName>
</protein>
<reference evidence="19" key="1">
    <citation type="journal article" date="2009" name="Comp. Biochem. Physiol.">
        <title>Cloning, expression, characterization and phylogenetic analysis of arginine kinase from greasyback shrimp (Metapenaeus ensis).</title>
        <authorList>
            <person name="Wang J.S."/>
            <person name="Zheng Z.L."/>
            <person name="Lei J."/>
            <person name="Pan J.C."/>
            <person name="Zou G.L."/>
        </authorList>
    </citation>
    <scope>NUCLEOTIDE SEQUENCE [MRNA]</scope>
    <scope>FUNCTION</scope>
    <scope>CATALYTIC ACTIVITY</scope>
    <scope>BIOPHYSICOCHEMICAL PROPERTIES</scope>
    <source>
        <tissue evidence="11">Muscle</tissue>
    </source>
</reference>
<reference key="2">
    <citation type="journal article" date="2003" name="J. Immunol.">
        <title>Proteomics and immunological analysis of a novel shrimp allergen, Pen m 2.</title>
        <authorList>
            <person name="Yu C.J."/>
            <person name="Lin Y.F."/>
            <person name="Chiang B.L."/>
            <person name="Chow L.P."/>
        </authorList>
    </citation>
    <scope>FUNCTION</scope>
    <scope>CATALYTIC ACTIVITY</scope>
    <scope>ALLERGEN</scope>
</reference>
<reference key="3">
    <citation type="journal article" date="2007" name="Mar. Biotechnol.">
        <title>Molecular coordinated regulation of gene expression during ovarian development in the penaeid shrimp.</title>
        <authorList>
            <person name="Lo T.S."/>
            <person name="Cui Z."/>
            <person name="Mong J.L."/>
            <person name="Wong Q.W."/>
            <person name="Chan S.M."/>
            <person name="Kwan H.S."/>
            <person name="Chu K.H."/>
        </authorList>
    </citation>
    <scope>DEVELOPMENTAL STAGE</scope>
</reference>
<reference key="4">
    <citation type="journal article" date="2011" name="Int. J. Biol. Macromol.">
        <title>The role of Cys271 in conformational changes of arginine kinase.</title>
        <authorList>
            <person name="Liu N."/>
            <person name="Wang J.S."/>
            <person name="Wang W.D."/>
            <person name="Pan J.C."/>
        </authorList>
    </citation>
    <scope>FUNCTION</scope>
    <scope>CATALYTIC ACTIVITY</scope>
    <scope>MUTAGENESIS OF CYS-271</scope>
</reference>
<reference key="5">
    <citation type="journal article" date="2011" name="Int. J. Biol. Macromol.">
        <title>The interaction between residues 62 and 193 play a key role in activity and structural stability of arginine kinase.</title>
        <authorList>
            <person name="Liu N."/>
            <person name="Wang J.S."/>
            <person name="Wang W.D."/>
            <person name="Pan J.C."/>
        </authorList>
    </citation>
    <scope>FUNCTION</scope>
    <scope>CATALYTIC ACTIVITY</scope>
    <scope>MUTAGENESIS OF ASP-62 AND ARG-193</scope>
</reference>
<proteinExistence type="evidence at protein level"/>